<keyword id="KW-0963">Cytoplasm</keyword>
<keyword id="KW-0489">Methyltransferase</keyword>
<keyword id="KW-0949">S-adenosyl-L-methionine</keyword>
<keyword id="KW-0808">Transferase</keyword>
<dbReference type="EC" id="2.1.1.77" evidence="1"/>
<dbReference type="EMBL" id="CP000967">
    <property type="protein sequence ID" value="ACD58303.1"/>
    <property type="molecule type" value="Genomic_DNA"/>
</dbReference>
<dbReference type="RefSeq" id="WP_011259522.1">
    <property type="nucleotide sequence ID" value="NC_010717.2"/>
</dbReference>
<dbReference type="SMR" id="B2SUB3"/>
<dbReference type="KEGG" id="xop:PXO_00164"/>
<dbReference type="eggNOG" id="COG2518">
    <property type="taxonomic scope" value="Bacteria"/>
</dbReference>
<dbReference type="HOGENOM" id="CLU_055432_2_0_6"/>
<dbReference type="Proteomes" id="UP000001740">
    <property type="component" value="Chromosome"/>
</dbReference>
<dbReference type="GO" id="GO:0005737">
    <property type="term" value="C:cytoplasm"/>
    <property type="evidence" value="ECO:0007669"/>
    <property type="project" value="UniProtKB-SubCell"/>
</dbReference>
<dbReference type="GO" id="GO:0004719">
    <property type="term" value="F:protein-L-isoaspartate (D-aspartate) O-methyltransferase activity"/>
    <property type="evidence" value="ECO:0007669"/>
    <property type="project" value="UniProtKB-UniRule"/>
</dbReference>
<dbReference type="GO" id="GO:0032259">
    <property type="term" value="P:methylation"/>
    <property type="evidence" value="ECO:0007669"/>
    <property type="project" value="UniProtKB-KW"/>
</dbReference>
<dbReference type="GO" id="GO:0036211">
    <property type="term" value="P:protein modification process"/>
    <property type="evidence" value="ECO:0007669"/>
    <property type="project" value="UniProtKB-UniRule"/>
</dbReference>
<dbReference type="GO" id="GO:0030091">
    <property type="term" value="P:protein repair"/>
    <property type="evidence" value="ECO:0007669"/>
    <property type="project" value="UniProtKB-UniRule"/>
</dbReference>
<dbReference type="CDD" id="cd02440">
    <property type="entry name" value="AdoMet_MTases"/>
    <property type="match status" value="1"/>
</dbReference>
<dbReference type="FunFam" id="3.40.50.150:FF:000010">
    <property type="entry name" value="Protein-L-isoaspartate O-methyltransferase"/>
    <property type="match status" value="1"/>
</dbReference>
<dbReference type="Gene3D" id="3.40.50.150">
    <property type="entry name" value="Vaccinia Virus protein VP39"/>
    <property type="match status" value="1"/>
</dbReference>
<dbReference type="HAMAP" id="MF_00090">
    <property type="entry name" value="PIMT"/>
    <property type="match status" value="1"/>
</dbReference>
<dbReference type="InterPro" id="IPR000682">
    <property type="entry name" value="PCMT"/>
</dbReference>
<dbReference type="InterPro" id="IPR029063">
    <property type="entry name" value="SAM-dependent_MTases_sf"/>
</dbReference>
<dbReference type="NCBIfam" id="TIGR00080">
    <property type="entry name" value="pimt"/>
    <property type="match status" value="1"/>
</dbReference>
<dbReference type="NCBIfam" id="NF001453">
    <property type="entry name" value="PRK00312.1"/>
    <property type="match status" value="1"/>
</dbReference>
<dbReference type="PANTHER" id="PTHR11579">
    <property type="entry name" value="PROTEIN-L-ISOASPARTATE O-METHYLTRANSFERASE"/>
    <property type="match status" value="1"/>
</dbReference>
<dbReference type="PANTHER" id="PTHR11579:SF0">
    <property type="entry name" value="PROTEIN-L-ISOASPARTATE(D-ASPARTATE) O-METHYLTRANSFERASE"/>
    <property type="match status" value="1"/>
</dbReference>
<dbReference type="Pfam" id="PF01135">
    <property type="entry name" value="PCMT"/>
    <property type="match status" value="1"/>
</dbReference>
<dbReference type="SUPFAM" id="SSF53335">
    <property type="entry name" value="S-adenosyl-L-methionine-dependent methyltransferases"/>
    <property type="match status" value="1"/>
</dbReference>
<dbReference type="PROSITE" id="PS01279">
    <property type="entry name" value="PCMT"/>
    <property type="match status" value="1"/>
</dbReference>
<name>PIMT_XANOP</name>
<proteinExistence type="inferred from homology"/>
<gene>
    <name evidence="1" type="primary">pcm</name>
    <name type="ordered locus">PXO_00164</name>
</gene>
<protein>
    <recommendedName>
        <fullName evidence="1">Protein-L-isoaspartate O-methyltransferase</fullName>
        <ecNumber evidence="1">2.1.1.77</ecNumber>
    </recommendedName>
    <alternativeName>
        <fullName evidence="1">L-isoaspartyl protein carboxyl methyltransferase</fullName>
    </alternativeName>
    <alternativeName>
        <fullName evidence="1">Protein L-isoaspartyl methyltransferase</fullName>
    </alternativeName>
    <alternativeName>
        <fullName evidence="1">Protein-beta-aspartate methyltransferase</fullName>
        <shortName evidence="1">PIMT</shortName>
    </alternativeName>
</protein>
<evidence type="ECO:0000255" key="1">
    <source>
        <dbReference type="HAMAP-Rule" id="MF_00090"/>
    </source>
</evidence>
<feature type="chain" id="PRO_0000351958" description="Protein-L-isoaspartate O-methyltransferase">
    <location>
        <begin position="1"/>
        <end position="225"/>
    </location>
</feature>
<feature type="active site" evidence="1">
    <location>
        <position position="75"/>
    </location>
</feature>
<accession>B2SUB3</accession>
<sequence>MTPRLRLQPESVGIGMTSQRVRDRLVERLREAGIHDEATLNAMQTVPRHLFIDEALASRAYEDTALPIGHGQTISQPWVVARMTEAVLQVTPTKVLEVGTGSGYQGAILAALGLEVYTVERIGDLLRQARKRFRHLGMNVRSKHDDGRIGWHEHGPYDAIVVTAAAPALVDALVDQLAVGGRLVAPVGGASSQSLVQLTRGADGTIEQQVLAPVTFVPLLSGMLD</sequence>
<organism>
    <name type="scientific">Xanthomonas oryzae pv. oryzae (strain PXO99A)</name>
    <dbReference type="NCBI Taxonomy" id="360094"/>
    <lineage>
        <taxon>Bacteria</taxon>
        <taxon>Pseudomonadati</taxon>
        <taxon>Pseudomonadota</taxon>
        <taxon>Gammaproteobacteria</taxon>
        <taxon>Lysobacterales</taxon>
        <taxon>Lysobacteraceae</taxon>
        <taxon>Xanthomonas</taxon>
    </lineage>
</organism>
<reference key="1">
    <citation type="journal article" date="2008" name="BMC Genomics">
        <title>Genome sequence and rapid evolution of the rice pathogen Xanthomonas oryzae pv. oryzae PXO99A.</title>
        <authorList>
            <person name="Salzberg S.L."/>
            <person name="Sommer D.D."/>
            <person name="Schatz M.C."/>
            <person name="Phillippy A.M."/>
            <person name="Rabinowicz P.D."/>
            <person name="Tsuge S."/>
            <person name="Furutani A."/>
            <person name="Ochiai H."/>
            <person name="Delcher A.L."/>
            <person name="Kelley D."/>
            <person name="Madupu R."/>
            <person name="Puiu D."/>
            <person name="Radune D."/>
            <person name="Shumway M."/>
            <person name="Trapnell C."/>
            <person name="Aparna G."/>
            <person name="Jha G."/>
            <person name="Pandey A."/>
            <person name="Patil P.B."/>
            <person name="Ishihara H."/>
            <person name="Meyer D.F."/>
            <person name="Szurek B."/>
            <person name="Verdier V."/>
            <person name="Koebnik R."/>
            <person name="Dow J.M."/>
            <person name="Ryan R.P."/>
            <person name="Hirata H."/>
            <person name="Tsuyumu S."/>
            <person name="Won Lee S."/>
            <person name="Seo Y.-S."/>
            <person name="Sriariyanum M."/>
            <person name="Ronald P.C."/>
            <person name="Sonti R.V."/>
            <person name="Van Sluys M.-A."/>
            <person name="Leach J.E."/>
            <person name="White F.F."/>
            <person name="Bogdanove A.J."/>
        </authorList>
    </citation>
    <scope>NUCLEOTIDE SEQUENCE [LARGE SCALE GENOMIC DNA]</scope>
    <source>
        <strain>PXO99A</strain>
    </source>
</reference>
<comment type="function">
    <text evidence="1">Catalyzes the methyl esterification of L-isoaspartyl residues in peptides and proteins that result from spontaneous decomposition of normal L-aspartyl and L-asparaginyl residues. It plays a role in the repair and/or degradation of damaged proteins.</text>
</comment>
<comment type="catalytic activity">
    <reaction evidence="1">
        <text>[protein]-L-isoaspartate + S-adenosyl-L-methionine = [protein]-L-isoaspartate alpha-methyl ester + S-adenosyl-L-homocysteine</text>
        <dbReference type="Rhea" id="RHEA:12705"/>
        <dbReference type="Rhea" id="RHEA-COMP:12143"/>
        <dbReference type="Rhea" id="RHEA-COMP:12144"/>
        <dbReference type="ChEBI" id="CHEBI:57856"/>
        <dbReference type="ChEBI" id="CHEBI:59789"/>
        <dbReference type="ChEBI" id="CHEBI:90596"/>
        <dbReference type="ChEBI" id="CHEBI:90598"/>
        <dbReference type="EC" id="2.1.1.77"/>
    </reaction>
</comment>
<comment type="subcellular location">
    <subcellularLocation>
        <location evidence="1">Cytoplasm</location>
    </subcellularLocation>
</comment>
<comment type="similarity">
    <text evidence="1">Belongs to the methyltransferase superfamily. L-isoaspartyl/D-aspartyl protein methyltransferase family.</text>
</comment>